<gene>
    <name evidence="1" type="primary">rlmN</name>
    <name type="ordered locus">BMA10229_A0060</name>
</gene>
<feature type="chain" id="PRO_0000350076" description="Dual-specificity RNA methyltransferase RlmN">
    <location>
        <begin position="1"/>
        <end position="378"/>
    </location>
</feature>
<feature type="domain" description="Radical SAM core" evidence="2">
    <location>
        <begin position="101"/>
        <end position="345"/>
    </location>
</feature>
<feature type="active site" description="Proton acceptor" evidence="1">
    <location>
        <position position="95"/>
    </location>
</feature>
<feature type="active site" description="S-methylcysteine intermediate" evidence="1">
    <location>
        <position position="350"/>
    </location>
</feature>
<feature type="binding site" evidence="1">
    <location>
        <position position="115"/>
    </location>
    <ligand>
        <name>[4Fe-4S] cluster</name>
        <dbReference type="ChEBI" id="CHEBI:49883"/>
        <note>4Fe-4S-S-AdoMet</note>
    </ligand>
</feature>
<feature type="binding site" evidence="1">
    <location>
        <position position="119"/>
    </location>
    <ligand>
        <name>[4Fe-4S] cluster</name>
        <dbReference type="ChEBI" id="CHEBI:49883"/>
        <note>4Fe-4S-S-AdoMet</note>
    </ligand>
</feature>
<feature type="binding site" evidence="1">
    <location>
        <position position="122"/>
    </location>
    <ligand>
        <name>[4Fe-4S] cluster</name>
        <dbReference type="ChEBI" id="CHEBI:49883"/>
        <note>4Fe-4S-S-AdoMet</note>
    </ligand>
</feature>
<feature type="binding site" evidence="1">
    <location>
        <begin position="176"/>
        <end position="177"/>
    </location>
    <ligand>
        <name>S-adenosyl-L-methionine</name>
        <dbReference type="ChEBI" id="CHEBI:59789"/>
    </ligand>
</feature>
<feature type="binding site" evidence="1">
    <location>
        <position position="208"/>
    </location>
    <ligand>
        <name>S-adenosyl-L-methionine</name>
        <dbReference type="ChEBI" id="CHEBI:59789"/>
    </ligand>
</feature>
<feature type="binding site" evidence="1">
    <location>
        <begin position="230"/>
        <end position="232"/>
    </location>
    <ligand>
        <name>S-adenosyl-L-methionine</name>
        <dbReference type="ChEBI" id="CHEBI:59789"/>
    </ligand>
</feature>
<feature type="binding site" evidence="1">
    <location>
        <position position="307"/>
    </location>
    <ligand>
        <name>S-adenosyl-L-methionine</name>
        <dbReference type="ChEBI" id="CHEBI:59789"/>
    </ligand>
</feature>
<feature type="disulfide bond" description="(transient)" evidence="1">
    <location>
        <begin position="108"/>
        <end position="350"/>
    </location>
</feature>
<dbReference type="EC" id="2.1.1.192" evidence="1"/>
<dbReference type="EMBL" id="CP000546">
    <property type="protein sequence ID" value="ABN00829.1"/>
    <property type="molecule type" value="Genomic_DNA"/>
</dbReference>
<dbReference type="RefSeq" id="WP_004192451.1">
    <property type="nucleotide sequence ID" value="NC_008836.1"/>
</dbReference>
<dbReference type="SMR" id="A2S2A0"/>
<dbReference type="GeneID" id="93060478"/>
<dbReference type="KEGG" id="bml:BMA10229_A0060"/>
<dbReference type="HOGENOM" id="CLU_029101_0_0_4"/>
<dbReference type="Proteomes" id="UP000002283">
    <property type="component" value="Chromosome I"/>
</dbReference>
<dbReference type="GO" id="GO:0005737">
    <property type="term" value="C:cytoplasm"/>
    <property type="evidence" value="ECO:0007669"/>
    <property type="project" value="UniProtKB-SubCell"/>
</dbReference>
<dbReference type="GO" id="GO:0051539">
    <property type="term" value="F:4 iron, 4 sulfur cluster binding"/>
    <property type="evidence" value="ECO:0007669"/>
    <property type="project" value="UniProtKB-UniRule"/>
</dbReference>
<dbReference type="GO" id="GO:0046872">
    <property type="term" value="F:metal ion binding"/>
    <property type="evidence" value="ECO:0007669"/>
    <property type="project" value="UniProtKB-KW"/>
</dbReference>
<dbReference type="GO" id="GO:0070040">
    <property type="term" value="F:rRNA (adenine(2503)-C2-)-methyltransferase activity"/>
    <property type="evidence" value="ECO:0007669"/>
    <property type="project" value="UniProtKB-UniRule"/>
</dbReference>
<dbReference type="GO" id="GO:0019843">
    <property type="term" value="F:rRNA binding"/>
    <property type="evidence" value="ECO:0007669"/>
    <property type="project" value="UniProtKB-UniRule"/>
</dbReference>
<dbReference type="GO" id="GO:0002935">
    <property type="term" value="F:tRNA (adenine(37)-C2)-methyltransferase activity"/>
    <property type="evidence" value="ECO:0007669"/>
    <property type="project" value="UniProtKB-UniRule"/>
</dbReference>
<dbReference type="GO" id="GO:0000049">
    <property type="term" value="F:tRNA binding"/>
    <property type="evidence" value="ECO:0007669"/>
    <property type="project" value="UniProtKB-UniRule"/>
</dbReference>
<dbReference type="GO" id="GO:0070475">
    <property type="term" value="P:rRNA base methylation"/>
    <property type="evidence" value="ECO:0007669"/>
    <property type="project" value="UniProtKB-UniRule"/>
</dbReference>
<dbReference type="GO" id="GO:0030488">
    <property type="term" value="P:tRNA methylation"/>
    <property type="evidence" value="ECO:0007669"/>
    <property type="project" value="UniProtKB-UniRule"/>
</dbReference>
<dbReference type="CDD" id="cd01335">
    <property type="entry name" value="Radical_SAM"/>
    <property type="match status" value="1"/>
</dbReference>
<dbReference type="FunFam" id="1.10.150.530:FF:000003">
    <property type="entry name" value="Dual-specificity RNA methyltransferase RlmN"/>
    <property type="match status" value="1"/>
</dbReference>
<dbReference type="FunFam" id="3.20.20.70:FF:000008">
    <property type="entry name" value="Dual-specificity RNA methyltransferase RlmN"/>
    <property type="match status" value="1"/>
</dbReference>
<dbReference type="Gene3D" id="1.10.150.530">
    <property type="match status" value="1"/>
</dbReference>
<dbReference type="Gene3D" id="3.20.20.70">
    <property type="entry name" value="Aldolase class I"/>
    <property type="match status" value="1"/>
</dbReference>
<dbReference type="HAMAP" id="MF_01849">
    <property type="entry name" value="RNA_methyltr_RlmN"/>
    <property type="match status" value="1"/>
</dbReference>
<dbReference type="InterPro" id="IPR013785">
    <property type="entry name" value="Aldolase_TIM"/>
</dbReference>
<dbReference type="InterPro" id="IPR040072">
    <property type="entry name" value="Methyltransferase_A"/>
</dbReference>
<dbReference type="InterPro" id="IPR048641">
    <property type="entry name" value="RlmN_N"/>
</dbReference>
<dbReference type="InterPro" id="IPR027492">
    <property type="entry name" value="RNA_MTrfase_RlmN"/>
</dbReference>
<dbReference type="InterPro" id="IPR004383">
    <property type="entry name" value="rRNA_lsu_MTrfase_RlmN/Cfr"/>
</dbReference>
<dbReference type="InterPro" id="IPR007197">
    <property type="entry name" value="rSAM"/>
</dbReference>
<dbReference type="NCBIfam" id="TIGR00048">
    <property type="entry name" value="rRNA_mod_RlmN"/>
    <property type="match status" value="1"/>
</dbReference>
<dbReference type="PANTHER" id="PTHR30544">
    <property type="entry name" value="23S RRNA METHYLTRANSFERASE"/>
    <property type="match status" value="1"/>
</dbReference>
<dbReference type="PANTHER" id="PTHR30544:SF5">
    <property type="entry name" value="RADICAL SAM CORE DOMAIN-CONTAINING PROTEIN"/>
    <property type="match status" value="1"/>
</dbReference>
<dbReference type="Pfam" id="PF04055">
    <property type="entry name" value="Radical_SAM"/>
    <property type="match status" value="1"/>
</dbReference>
<dbReference type="Pfam" id="PF21016">
    <property type="entry name" value="RlmN_N"/>
    <property type="match status" value="1"/>
</dbReference>
<dbReference type="PIRSF" id="PIRSF006004">
    <property type="entry name" value="CHP00048"/>
    <property type="match status" value="1"/>
</dbReference>
<dbReference type="SFLD" id="SFLDF00275">
    <property type="entry name" value="adenosine_C2_methyltransferase"/>
    <property type="match status" value="1"/>
</dbReference>
<dbReference type="SFLD" id="SFLDG01062">
    <property type="entry name" value="methyltransferase_(Class_A)"/>
    <property type="match status" value="1"/>
</dbReference>
<dbReference type="SUPFAM" id="SSF102114">
    <property type="entry name" value="Radical SAM enzymes"/>
    <property type="match status" value="1"/>
</dbReference>
<dbReference type="PROSITE" id="PS51918">
    <property type="entry name" value="RADICAL_SAM"/>
    <property type="match status" value="1"/>
</dbReference>
<accession>A2S2A0</accession>
<evidence type="ECO:0000255" key="1">
    <source>
        <dbReference type="HAMAP-Rule" id="MF_01849"/>
    </source>
</evidence>
<evidence type="ECO:0000255" key="2">
    <source>
        <dbReference type="PROSITE-ProRule" id="PRU01266"/>
    </source>
</evidence>
<comment type="function">
    <text evidence="1">Specifically methylates position 2 of adenine 2503 in 23S rRNA and position 2 of adenine 37 in tRNAs. m2A2503 modification seems to play a crucial role in the proofreading step occurring at the peptidyl transferase center and thus would serve to optimize ribosomal fidelity.</text>
</comment>
<comment type="catalytic activity">
    <reaction evidence="1">
        <text>adenosine(2503) in 23S rRNA + 2 reduced [2Fe-2S]-[ferredoxin] + 2 S-adenosyl-L-methionine = 2-methyladenosine(2503) in 23S rRNA + 5'-deoxyadenosine + L-methionine + 2 oxidized [2Fe-2S]-[ferredoxin] + S-adenosyl-L-homocysteine</text>
        <dbReference type="Rhea" id="RHEA:42916"/>
        <dbReference type="Rhea" id="RHEA-COMP:10000"/>
        <dbReference type="Rhea" id="RHEA-COMP:10001"/>
        <dbReference type="Rhea" id="RHEA-COMP:10152"/>
        <dbReference type="Rhea" id="RHEA-COMP:10282"/>
        <dbReference type="ChEBI" id="CHEBI:17319"/>
        <dbReference type="ChEBI" id="CHEBI:33737"/>
        <dbReference type="ChEBI" id="CHEBI:33738"/>
        <dbReference type="ChEBI" id="CHEBI:57844"/>
        <dbReference type="ChEBI" id="CHEBI:57856"/>
        <dbReference type="ChEBI" id="CHEBI:59789"/>
        <dbReference type="ChEBI" id="CHEBI:74411"/>
        <dbReference type="ChEBI" id="CHEBI:74497"/>
        <dbReference type="EC" id="2.1.1.192"/>
    </reaction>
</comment>
<comment type="catalytic activity">
    <reaction evidence="1">
        <text>adenosine(37) in tRNA + 2 reduced [2Fe-2S]-[ferredoxin] + 2 S-adenosyl-L-methionine = 2-methyladenosine(37) in tRNA + 5'-deoxyadenosine + L-methionine + 2 oxidized [2Fe-2S]-[ferredoxin] + S-adenosyl-L-homocysteine</text>
        <dbReference type="Rhea" id="RHEA:43332"/>
        <dbReference type="Rhea" id="RHEA-COMP:10000"/>
        <dbReference type="Rhea" id="RHEA-COMP:10001"/>
        <dbReference type="Rhea" id="RHEA-COMP:10162"/>
        <dbReference type="Rhea" id="RHEA-COMP:10485"/>
        <dbReference type="ChEBI" id="CHEBI:17319"/>
        <dbReference type="ChEBI" id="CHEBI:33737"/>
        <dbReference type="ChEBI" id="CHEBI:33738"/>
        <dbReference type="ChEBI" id="CHEBI:57844"/>
        <dbReference type="ChEBI" id="CHEBI:57856"/>
        <dbReference type="ChEBI" id="CHEBI:59789"/>
        <dbReference type="ChEBI" id="CHEBI:74411"/>
        <dbReference type="ChEBI" id="CHEBI:74497"/>
        <dbReference type="EC" id="2.1.1.192"/>
    </reaction>
</comment>
<comment type="cofactor">
    <cofactor evidence="1">
        <name>[4Fe-4S] cluster</name>
        <dbReference type="ChEBI" id="CHEBI:49883"/>
    </cofactor>
    <text evidence="1">Binds 1 [4Fe-4S] cluster. The cluster is coordinated with 3 cysteines and an exchangeable S-adenosyl-L-methionine.</text>
</comment>
<comment type="subcellular location">
    <subcellularLocation>
        <location evidence="1">Cytoplasm</location>
    </subcellularLocation>
</comment>
<comment type="miscellaneous">
    <text evidence="1">Reaction proceeds by a ping-pong mechanism involving intermediate methylation of a conserved cysteine residue.</text>
</comment>
<comment type="similarity">
    <text evidence="1">Belongs to the radical SAM superfamily. RlmN family.</text>
</comment>
<name>RLMN_BURM9</name>
<protein>
    <recommendedName>
        <fullName evidence="1">Dual-specificity RNA methyltransferase RlmN</fullName>
        <ecNumber evidence="1">2.1.1.192</ecNumber>
    </recommendedName>
    <alternativeName>
        <fullName evidence="1">23S rRNA (adenine(2503)-C(2))-methyltransferase</fullName>
    </alternativeName>
    <alternativeName>
        <fullName evidence="1">23S rRNA m2A2503 methyltransferase</fullName>
    </alternativeName>
    <alternativeName>
        <fullName evidence="1">Ribosomal RNA large subunit methyltransferase N</fullName>
    </alternativeName>
    <alternativeName>
        <fullName evidence="1">tRNA (adenine(37)-C(2))-methyltransferase</fullName>
    </alternativeName>
    <alternativeName>
        <fullName evidence="1">tRNA m2A37 methyltransferase</fullName>
    </alternativeName>
</protein>
<sequence>MAGETIVNLLDLDAEGLVAYCGSLGEKAFRAKQLQRWIHQYNAADFDGMTDLAKSLREKLKGRAVIGTPDILSDHVSADGTRKWLINVGNGNAVETVFIPEETRGTLCVSSQAGCAVNCRFCSTGKQGFSRNLSTGEIVGQLRMAEFALRASLGRAPGPNGKAERVITNVVMMGMGEPLLNYSAVVPAMRLMLDDNAYGLSRRRVTLSTSGVVPMMDRLGAELPVALAVSLHAPNDALRDELVPLNKKHPLRELMAACQRYLKVAPRDFITFEYCMLDGVNDTEAHARELLAVTRDVPCKFNLIPFNPFPESGLVRSKTEQIKRFAQVLIDAGVVTTIRKTRGDDIDAACGQLAGAVKDRTRLAERTGASKIIEVRAV</sequence>
<reference key="1">
    <citation type="journal article" date="2010" name="Genome Biol. Evol.">
        <title>Continuing evolution of Burkholderia mallei through genome reduction and large-scale rearrangements.</title>
        <authorList>
            <person name="Losada L."/>
            <person name="Ronning C.M."/>
            <person name="DeShazer D."/>
            <person name="Woods D."/>
            <person name="Fedorova N."/>
            <person name="Kim H.S."/>
            <person name="Shabalina S.A."/>
            <person name="Pearson T.R."/>
            <person name="Brinkac L."/>
            <person name="Tan P."/>
            <person name="Nandi T."/>
            <person name="Crabtree J."/>
            <person name="Badger J."/>
            <person name="Beckstrom-Sternberg S."/>
            <person name="Saqib M."/>
            <person name="Schutzer S.E."/>
            <person name="Keim P."/>
            <person name="Nierman W.C."/>
        </authorList>
    </citation>
    <scope>NUCLEOTIDE SEQUENCE [LARGE SCALE GENOMIC DNA]</scope>
    <source>
        <strain>NCTC 10229</strain>
    </source>
</reference>
<organism>
    <name type="scientific">Burkholderia mallei (strain NCTC 10229)</name>
    <dbReference type="NCBI Taxonomy" id="412022"/>
    <lineage>
        <taxon>Bacteria</taxon>
        <taxon>Pseudomonadati</taxon>
        <taxon>Pseudomonadota</taxon>
        <taxon>Betaproteobacteria</taxon>
        <taxon>Burkholderiales</taxon>
        <taxon>Burkholderiaceae</taxon>
        <taxon>Burkholderia</taxon>
        <taxon>pseudomallei group</taxon>
    </lineage>
</organism>
<keyword id="KW-0004">4Fe-4S</keyword>
<keyword id="KW-0963">Cytoplasm</keyword>
<keyword id="KW-1015">Disulfide bond</keyword>
<keyword id="KW-0408">Iron</keyword>
<keyword id="KW-0411">Iron-sulfur</keyword>
<keyword id="KW-0479">Metal-binding</keyword>
<keyword id="KW-0489">Methyltransferase</keyword>
<keyword id="KW-0698">rRNA processing</keyword>
<keyword id="KW-0949">S-adenosyl-L-methionine</keyword>
<keyword id="KW-0808">Transferase</keyword>
<keyword id="KW-0819">tRNA processing</keyword>
<proteinExistence type="inferred from homology"/>